<feature type="chain" id="PRO_0000075297" description="Peptidyl-prolyl cis-trans isomerase FKBP1B">
    <location>
        <begin position="1"/>
        <end position="108"/>
    </location>
</feature>
<feature type="domain" description="PPIase FKBP-type" evidence="2">
    <location>
        <begin position="20"/>
        <end position="108"/>
    </location>
</feature>
<keyword id="KW-0002">3D-structure</keyword>
<keyword id="KW-0963">Cytoplasm</keyword>
<keyword id="KW-0413">Isomerase</keyword>
<keyword id="KW-1185">Reference proteome</keyword>
<keyword id="KW-0697">Rotamase</keyword>
<keyword id="KW-0703">Sarcoplasmic reticulum</keyword>
<dbReference type="EC" id="5.2.1.8"/>
<dbReference type="EMBL" id="AY159324">
    <property type="protein sequence ID" value="AAN72433.1"/>
    <property type="molecule type" value="mRNA"/>
</dbReference>
<dbReference type="RefSeq" id="NP_001075614.1">
    <property type="nucleotide sequence ID" value="NM_001082145.1"/>
</dbReference>
<dbReference type="PDB" id="8RRT">
    <property type="method" value="EM"/>
    <property type="resolution" value="4.60 A"/>
    <property type="chains" value="A/D/H/I=2-108"/>
</dbReference>
<dbReference type="PDB" id="8RRU">
    <property type="method" value="EM"/>
    <property type="resolution" value="4.70 A"/>
    <property type="chains" value="A/D/H/I=2-108"/>
</dbReference>
<dbReference type="PDB" id="8RRV">
    <property type="method" value="EM"/>
    <property type="resolution" value="3.20 A"/>
    <property type="chains" value="A/D/H/I=2-108"/>
</dbReference>
<dbReference type="PDB" id="8RRW">
    <property type="method" value="EM"/>
    <property type="resolution" value="4.20 A"/>
    <property type="chains" value="A/D/H/I=2-108"/>
</dbReference>
<dbReference type="PDB" id="8RRX">
    <property type="method" value="EM"/>
    <property type="resolution" value="3.10 A"/>
    <property type="chains" value="F/H/J/L=2-108"/>
</dbReference>
<dbReference type="PDB" id="8RS0">
    <property type="method" value="EM"/>
    <property type="resolution" value="3.30 A"/>
    <property type="chains" value="A/D/H/I=2-108"/>
</dbReference>
<dbReference type="PDBsum" id="8RRT"/>
<dbReference type="PDBsum" id="8RRU"/>
<dbReference type="PDBsum" id="8RRV"/>
<dbReference type="PDBsum" id="8RRW"/>
<dbReference type="PDBsum" id="8RRX"/>
<dbReference type="PDBsum" id="8RS0"/>
<dbReference type="BMRB" id="Q8HYX6"/>
<dbReference type="EMDB" id="EMD-19464"/>
<dbReference type="EMDB" id="EMD-19465"/>
<dbReference type="EMDB" id="EMD-19466"/>
<dbReference type="EMDB" id="EMD-19467"/>
<dbReference type="EMDB" id="EMD-19468"/>
<dbReference type="EMDB" id="EMD-19472"/>
<dbReference type="EMDB" id="EMD-19486"/>
<dbReference type="SMR" id="Q8HYX6"/>
<dbReference type="FunCoup" id="Q8HYX6">
    <property type="interactions" value="470"/>
</dbReference>
<dbReference type="STRING" id="9986.ENSOCUP00000009643"/>
<dbReference type="GeneID" id="100008888"/>
<dbReference type="KEGG" id="ocu:100008888"/>
<dbReference type="CTD" id="2281"/>
<dbReference type="InParanoid" id="Q8HYX6"/>
<dbReference type="OrthoDB" id="1902587at2759"/>
<dbReference type="Proteomes" id="UP000001811">
    <property type="component" value="Unplaced"/>
</dbReference>
<dbReference type="GO" id="GO:0043231">
    <property type="term" value="C:intracellular membrane-bounded organelle"/>
    <property type="evidence" value="ECO:0000314"/>
    <property type="project" value="AgBase"/>
</dbReference>
<dbReference type="GO" id="GO:0033017">
    <property type="term" value="C:sarcoplasmic reticulum membrane"/>
    <property type="evidence" value="ECO:0007669"/>
    <property type="project" value="TreeGrafter"/>
</dbReference>
<dbReference type="GO" id="GO:0014802">
    <property type="term" value="C:terminal cisterna"/>
    <property type="evidence" value="ECO:0000314"/>
    <property type="project" value="AgBase"/>
</dbReference>
<dbReference type="GO" id="GO:0003755">
    <property type="term" value="F:peptidyl-prolyl cis-trans isomerase activity"/>
    <property type="evidence" value="ECO:0007669"/>
    <property type="project" value="UniProtKB-KW"/>
</dbReference>
<dbReference type="GO" id="GO:0010881">
    <property type="term" value="P:regulation of cardiac muscle contraction by regulation of the release of sequestered calcium ion"/>
    <property type="evidence" value="ECO:0007669"/>
    <property type="project" value="TreeGrafter"/>
</dbReference>
<dbReference type="GO" id="GO:0010880">
    <property type="term" value="P:regulation of release of sequestered calcium ion into cytosol by sarcoplasmic reticulum"/>
    <property type="evidence" value="ECO:0000315"/>
    <property type="project" value="AgBase"/>
</dbReference>
<dbReference type="GO" id="GO:0060314">
    <property type="term" value="P:regulation of ryanodine-sensitive calcium-release channel activity"/>
    <property type="evidence" value="ECO:0000315"/>
    <property type="project" value="AgBase"/>
</dbReference>
<dbReference type="FunFam" id="3.10.50.40:FF:000008">
    <property type="entry name" value="Peptidylprolyl isomerase"/>
    <property type="match status" value="1"/>
</dbReference>
<dbReference type="Gene3D" id="3.10.50.40">
    <property type="match status" value="1"/>
</dbReference>
<dbReference type="InterPro" id="IPR050689">
    <property type="entry name" value="FKBP-type_PPIase"/>
</dbReference>
<dbReference type="InterPro" id="IPR046357">
    <property type="entry name" value="PPIase_dom_sf"/>
</dbReference>
<dbReference type="InterPro" id="IPR001179">
    <property type="entry name" value="PPIase_FKBP_dom"/>
</dbReference>
<dbReference type="PANTHER" id="PTHR10516">
    <property type="entry name" value="PEPTIDYL-PROLYL CIS-TRANS ISOMERASE"/>
    <property type="match status" value="1"/>
</dbReference>
<dbReference type="PANTHER" id="PTHR10516:SF429">
    <property type="entry name" value="PEPTIDYL-PROLYL CIS-TRANS ISOMERASE FKBP1B"/>
    <property type="match status" value="1"/>
</dbReference>
<dbReference type="Pfam" id="PF00254">
    <property type="entry name" value="FKBP_C"/>
    <property type="match status" value="1"/>
</dbReference>
<dbReference type="SUPFAM" id="SSF54534">
    <property type="entry name" value="FKBP-like"/>
    <property type="match status" value="1"/>
</dbReference>
<dbReference type="PROSITE" id="PS50059">
    <property type="entry name" value="FKBP_PPIASE"/>
    <property type="match status" value="1"/>
</dbReference>
<evidence type="ECO:0000250" key="1"/>
<evidence type="ECO:0000255" key="2">
    <source>
        <dbReference type="PROSITE-ProRule" id="PRU00277"/>
    </source>
</evidence>
<evidence type="ECO:0000305" key="3"/>
<organism>
    <name type="scientific">Oryctolagus cuniculus</name>
    <name type="common">Rabbit</name>
    <dbReference type="NCBI Taxonomy" id="9986"/>
    <lineage>
        <taxon>Eukaryota</taxon>
        <taxon>Metazoa</taxon>
        <taxon>Chordata</taxon>
        <taxon>Craniata</taxon>
        <taxon>Vertebrata</taxon>
        <taxon>Euteleostomi</taxon>
        <taxon>Mammalia</taxon>
        <taxon>Eutheria</taxon>
        <taxon>Euarchontoglires</taxon>
        <taxon>Glires</taxon>
        <taxon>Lagomorpha</taxon>
        <taxon>Leporidae</taxon>
        <taxon>Oryctolagus</taxon>
    </lineage>
</organism>
<proteinExistence type="evidence at protein level"/>
<name>FKB1B_RABIT</name>
<protein>
    <recommendedName>
        <fullName>Peptidyl-prolyl cis-trans isomerase FKBP1B</fullName>
        <shortName>PPIase FKBP1B</shortName>
        <ecNumber>5.2.1.8</ecNumber>
    </recommendedName>
    <alternativeName>
        <fullName>12.6 kDa FK506-binding protein</fullName>
        <shortName>12.6 kDa FKBP</shortName>
        <shortName>FKBP-12.6</shortName>
    </alternativeName>
    <alternativeName>
        <fullName>FK506-binding protein 1B</fullName>
        <shortName>FKBP-1B</shortName>
    </alternativeName>
    <alternativeName>
        <fullName>Immunophilin FKBP12.6</fullName>
    </alternativeName>
    <alternativeName>
        <fullName>Rotamase</fullName>
    </alternativeName>
</protein>
<gene>
    <name type="primary">FKBP1B</name>
    <name type="synonym">FKBP12.6</name>
</gene>
<accession>Q8HYX6</accession>
<reference key="1">
    <citation type="journal article" date="2004" name="J. Biol. Chem.">
        <title>N-terminal region of FKBP12 is essential for binding to the skeletal ryanodine receptor.</title>
        <authorList>
            <person name="Lee E.H."/>
            <person name="Rho S.H."/>
            <person name="Kwon S.J."/>
            <person name="Eom S.H."/>
            <person name="Allen P.D."/>
            <person name="Kim D.H."/>
        </authorList>
    </citation>
    <scope>NUCLEOTIDE SEQUENCE [MRNA]</scope>
    <source>
        <strain>New Zealand white</strain>
        <tissue>Heart</tissue>
    </source>
</reference>
<comment type="function">
    <text evidence="1">Has the potential to contribute to the immunosuppressive and toxic effects of FK506 and rapamycin. PPIases accelerate the folding of proteins. It catalyzes the cis-trans isomerization of proline imidic peptide bonds in oligopeptides (By similarity).</text>
</comment>
<comment type="catalytic activity">
    <reaction>
        <text>[protein]-peptidylproline (omega=180) = [protein]-peptidylproline (omega=0)</text>
        <dbReference type="Rhea" id="RHEA:16237"/>
        <dbReference type="Rhea" id="RHEA-COMP:10747"/>
        <dbReference type="Rhea" id="RHEA-COMP:10748"/>
        <dbReference type="ChEBI" id="CHEBI:83833"/>
        <dbReference type="ChEBI" id="CHEBI:83834"/>
        <dbReference type="EC" id="5.2.1.8"/>
    </reaction>
</comment>
<comment type="activity regulation">
    <text evidence="1">Inhibited by both FK506 and rapamycin.</text>
</comment>
<comment type="subunit">
    <text evidence="1">Identified in a complex composed of RYR2, FKBP1B, PKA catalytic subunit, PRKAR2A, AKAP6, and the protein phosphatases PP2A and PP1. Interacts directly with RYR2 (By similarity).</text>
</comment>
<comment type="subcellular location">
    <subcellularLocation>
        <location evidence="1">Cytoplasm</location>
    </subcellularLocation>
    <subcellularLocation>
        <location evidence="1">Sarcoplasmic reticulum</location>
    </subcellularLocation>
</comment>
<comment type="similarity">
    <text evidence="3">Belongs to the FKBP-type PPIase family. FKBP1 subfamily.</text>
</comment>
<sequence length="108" mass="11724">MGVEIETISPGDGRTFPKKGQTCVVHYTGMLQNGKKFDSSRDRNKPFKFRIGKQEVIKGFEEGAAQMSLGQRAKLTCTPDVAYGATGHPGVIPPNATLIFGVELLNLE</sequence>